<comment type="function">
    <text evidence="4 5 6">Dual function macrocyclase-peptidase involved in the biosynthesis of the highly toxic amanitin toxin family of macrocycles (PubMed:22202811, PubMed:28866879, PubMed:29051530). Cleaves peptide bonds on the C-terminal side of prolyl residues (PubMed:29051530). The enzyme first removes 10 residues from the N-terminus of a 35-residue substrate (PubMed:29051530). Conformational trapping of the 25 amino-acid peptide forces the enzyme to release this intermediate rather than proceed to macrocyclization (PubMed:29051530). The enzyme rebinds the 25 amino-acid peptide in a different conformation and catalyzes macrocyclization of the N-terminal eight residues (PubMed:28866879, PubMed:29051530).</text>
</comment>
<comment type="catalytic activity">
    <reaction evidence="5 6">
        <text>Hydrolysis of Pro-|-Xaa &gt;&gt; Ala-|-Xaa in oligopeptides.</text>
        <dbReference type="EC" id="3.4.21.26"/>
    </reaction>
</comment>
<comment type="biophysicochemical properties">
    <kinetics>
        <KM evidence="6">23 uM for the full alpha-amanitin 35mer proprotein</KM>
        <KM evidence="6">51 uM for the 25mer IWGIGCNPWTAEHVDQTLASGNDIC</KM>
        <KM evidence="6">19 uM for the 25mer LWGIGCNPWTAEHVDQTLASGNDIC</KM>
        <KM evidence="6">8 uM for the 25mer IFGIGCNPWTAEHVDQTLASGNDIC</KM>
        <KM evidence="6">28 uM for the 25mer IWGIGSNPWTAEHVDQTLASGNDIC</KM>
        <KM evidence="6">10 uM for the 25mer IWGIGCNPWTAEHVDQTLASGNDIS</KM>
        <KM evidence="6">25 uM for the 19mer IWGIGCNPDQTLASGNDIC</KM>
        <KM evidence="6">380 uM for the 14mer IWGIGCNPWTAEHV</KM>
        <KM evidence="6">24.4 uM for the 13mer IWGIGCNPWTAEH</KM>
    </kinetics>
</comment>
<comment type="subunit">
    <text evidence="1">Monomer.</text>
</comment>
<comment type="similarity">
    <text evidence="9">Belongs to the peptidase S9A family.</text>
</comment>
<comment type="online information" name="Protein Spotlight">
    <link uri="https://www.proteinspotlight.org/back_issues/202/"/>
    <text>More to it - Issue 202 of April 2018</text>
</comment>
<dbReference type="EC" id="3.4.21.26" evidence="5 6"/>
<dbReference type="EMBL" id="JN827314">
    <property type="protein sequence ID" value="AEX26938.2"/>
    <property type="molecule type" value="mRNA"/>
</dbReference>
<dbReference type="EMBL" id="KL142408">
    <property type="protein sequence ID" value="KDR68475.1"/>
    <property type="molecule type" value="Genomic_DNA"/>
</dbReference>
<dbReference type="PDB" id="5N4B">
    <property type="method" value="X-ray"/>
    <property type="resolution" value="1.44 A"/>
    <property type="chains" value="A/B=1-730"/>
</dbReference>
<dbReference type="PDB" id="5N4C">
    <property type="method" value="X-ray"/>
    <property type="resolution" value="2.19 A"/>
    <property type="chains" value="A/B/C/D=1-730"/>
</dbReference>
<dbReference type="PDB" id="5N4D">
    <property type="method" value="X-ray"/>
    <property type="resolution" value="1.62 A"/>
    <property type="chains" value="A/B=1-730"/>
</dbReference>
<dbReference type="PDB" id="5N4E">
    <property type="method" value="X-ray"/>
    <property type="resolution" value="2.90 A"/>
    <property type="chains" value="A/B=1-730"/>
</dbReference>
<dbReference type="PDB" id="5N4F">
    <property type="method" value="X-ray"/>
    <property type="resolution" value="2.40 A"/>
    <property type="chains" value="A=1-730"/>
</dbReference>
<dbReference type="PDBsum" id="5N4B"/>
<dbReference type="PDBsum" id="5N4C"/>
<dbReference type="PDBsum" id="5N4D"/>
<dbReference type="PDBsum" id="5N4E"/>
<dbReference type="PDBsum" id="5N4F"/>
<dbReference type="SMR" id="H2E7Q8"/>
<dbReference type="STRING" id="685588.H2E7Q8"/>
<dbReference type="ESTHER" id="9agar-h2e7q8">
    <property type="family name" value="S9N_PPCE_Peptidase_S9"/>
</dbReference>
<dbReference type="MEROPS" id="S09.077"/>
<dbReference type="OrthoDB" id="248387at2759"/>
<dbReference type="Proteomes" id="UP000027222">
    <property type="component" value="Unassembled WGS sequence"/>
</dbReference>
<dbReference type="GO" id="GO:0005829">
    <property type="term" value="C:cytosol"/>
    <property type="evidence" value="ECO:0007669"/>
    <property type="project" value="TreeGrafter"/>
</dbReference>
<dbReference type="GO" id="GO:0070012">
    <property type="term" value="F:oligopeptidase activity"/>
    <property type="evidence" value="ECO:0007669"/>
    <property type="project" value="TreeGrafter"/>
</dbReference>
<dbReference type="GO" id="GO:0004252">
    <property type="term" value="F:serine-type endopeptidase activity"/>
    <property type="evidence" value="ECO:0007669"/>
    <property type="project" value="UniProtKB-EC"/>
</dbReference>
<dbReference type="GO" id="GO:0006508">
    <property type="term" value="P:proteolysis"/>
    <property type="evidence" value="ECO:0007669"/>
    <property type="project" value="UniProtKB-KW"/>
</dbReference>
<dbReference type="FunFam" id="3.40.50.1820:FF:000005">
    <property type="entry name" value="Prolyl endopeptidase"/>
    <property type="match status" value="1"/>
</dbReference>
<dbReference type="Gene3D" id="3.40.50.1820">
    <property type="entry name" value="alpha/beta hydrolase"/>
    <property type="match status" value="1"/>
</dbReference>
<dbReference type="Gene3D" id="2.130.10.120">
    <property type="entry name" value="Prolyl oligopeptidase, N-terminal domain"/>
    <property type="match status" value="1"/>
</dbReference>
<dbReference type="InterPro" id="IPR029058">
    <property type="entry name" value="AB_hydrolase_fold"/>
</dbReference>
<dbReference type="InterPro" id="IPR002471">
    <property type="entry name" value="Pept_S9_AS"/>
</dbReference>
<dbReference type="InterPro" id="IPR023302">
    <property type="entry name" value="Pept_S9A_N"/>
</dbReference>
<dbReference type="InterPro" id="IPR001375">
    <property type="entry name" value="Peptidase_S9_cat"/>
</dbReference>
<dbReference type="InterPro" id="IPR002470">
    <property type="entry name" value="Peptidase_S9A"/>
</dbReference>
<dbReference type="InterPro" id="IPR051167">
    <property type="entry name" value="Prolyl_oligopep/macrocyclase"/>
</dbReference>
<dbReference type="PANTHER" id="PTHR42881">
    <property type="entry name" value="PROLYL ENDOPEPTIDASE"/>
    <property type="match status" value="1"/>
</dbReference>
<dbReference type="PANTHER" id="PTHR42881:SF2">
    <property type="entry name" value="PROLYL ENDOPEPTIDASE"/>
    <property type="match status" value="1"/>
</dbReference>
<dbReference type="Pfam" id="PF00326">
    <property type="entry name" value="Peptidase_S9"/>
    <property type="match status" value="1"/>
</dbReference>
<dbReference type="Pfam" id="PF02897">
    <property type="entry name" value="Peptidase_S9_N"/>
    <property type="match status" value="1"/>
</dbReference>
<dbReference type="PRINTS" id="PR00862">
    <property type="entry name" value="PROLIGOPTASE"/>
</dbReference>
<dbReference type="SUPFAM" id="SSF53474">
    <property type="entry name" value="alpha/beta-Hydrolases"/>
    <property type="match status" value="1"/>
</dbReference>
<dbReference type="SUPFAM" id="SSF50993">
    <property type="entry name" value="Peptidase/esterase 'gauge' domain"/>
    <property type="match status" value="1"/>
</dbReference>
<dbReference type="PROSITE" id="PS00708">
    <property type="entry name" value="PRO_ENDOPEP_SER"/>
    <property type="match status" value="1"/>
</dbReference>
<gene>
    <name evidence="7" type="primary">POPB</name>
    <name type="ORF">GALMADRAFT_78538</name>
</gene>
<sequence length="730" mass="81781">MSSVTWAPGNYPSTRRSDHVDTYQSASKGEVPVPDPYQWLEESTDEVDKWTTAQADLAQSYLDQNADIQKLAEKFRASRNYAKFSAPTLLDDGHWYWFYNRGLQSQSVLYRSKEPALPDFSKGDDNVGDVFFDPNVLAADGSAGMVLCKFSPDGKFFAYAVSHLGGDYSTIYVRSTSSPLSQASVAQGVDGRLSDEVKWFKFSTIIWTKDSKGFLYQRYPARERHEGTRSDRNAMMCYHKVGTTQEEDIIVYQDNEHPEWIYGADTSEDGKYLYLYQFKDTSKKNLLWVAELDEDGVKSGIHWRKVVNEYAADYNIITNHGSLVYIKTNLNAPQYKVITIDLSKDEPEIRDFIPEEKDAKLAQVNCANEEYFVAIYKRNVKDEIYLYSKAGVQLTRLAPDFVGAASIANRQKQTHFFLTLSGFNTPGTIARYDFTAPETQRFSILRTTKVNELDPDDFESTQVWYESKDGTKIPMFIVRHKSTKFDGTAAAIQYGYGGFATSADPFFSPIILTFLQTYGAIFAVPSIRGGGEFGEEWHKGGRRETKVNTFDDFIAAAQFLVKNKYAAPGKVAINGASNGGLLVMGSIVRAPEGTFGAAVPEGGVADLLKFHKFTGGQAWISEYGNPSIPEEFDYIYPLSPVHNVRTDKVMPATLITVNIGDGRVVPMHSFKFIATLQHNVPQNPHPLLIKIDKSWLGHGMGKPTDKNVKDAADKWGFIARALGLELKTVE</sequence>
<keyword id="KW-0002">3D-structure</keyword>
<keyword id="KW-0378">Hydrolase</keyword>
<keyword id="KW-0645">Protease</keyword>
<keyword id="KW-1185">Reference proteome</keyword>
<keyword id="KW-0720">Serine protease</keyword>
<reference key="1">
    <citation type="journal article" date="2012" name="Fungal Genet. Biol.">
        <title>Ribosomal biosynthesis of alpha-amanitin in Galerina marginata.</title>
        <authorList>
            <person name="Luo H."/>
            <person name="Hallen-Adams H.E."/>
            <person name="Scott-Craig J.S."/>
            <person name="Walton J.D."/>
        </authorList>
    </citation>
    <scope>NUCLEOTIDE SEQUENCE [MRNA]</scope>
    <scope>FUNCTION</scope>
    <source>
        <strain>CBS 339.88</strain>
    </source>
</reference>
<reference key="2">
    <citation type="journal article" date="2014" name="Proc. Natl. Acad. Sci. U.S.A.">
        <title>Extensive sampling of basidiomycete genomes demonstrates inadequacy of the white-rot/brown-rot paradigm for wood decay fungi.</title>
        <authorList>
            <person name="Riley R."/>
            <person name="Salamov A.A."/>
            <person name="Brown D.W."/>
            <person name="Nagy L.G."/>
            <person name="Floudas D."/>
            <person name="Held B.W."/>
            <person name="Levasseur A."/>
            <person name="Lombard V."/>
            <person name="Morin E."/>
            <person name="Otillar R."/>
            <person name="Lindquist E.A."/>
            <person name="Sun H."/>
            <person name="LaButti K.M."/>
            <person name="Schmutz J."/>
            <person name="Jabbour D."/>
            <person name="Luo H."/>
            <person name="Baker S.E."/>
            <person name="Pisabarro A.G."/>
            <person name="Walton J.D."/>
            <person name="Blanchette R.A."/>
            <person name="Henrissat B."/>
            <person name="Martin F."/>
            <person name="Cullen D."/>
            <person name="Hibbett D.S."/>
            <person name="Grigoriev I.V."/>
        </authorList>
    </citation>
    <scope>NUCLEOTIDE SEQUENCE [LARGE SCALE GENOMIC DNA]</scope>
    <source>
        <strain>CBS 339.88</strain>
    </source>
</reference>
<reference key="3">
    <citation type="journal article" date="2018" name="ACS Synth. Biol.">
        <title>Versatility of prolyl oligopeptidase B in peptide macrocyclization.</title>
        <authorList>
            <person name="Sgambelluri R.M."/>
            <person name="Smith M.O."/>
            <person name="Walton J.D."/>
        </authorList>
    </citation>
    <scope>FUNCTION</scope>
    <scope>CATALYTIC ACTIVITY</scope>
</reference>
<reference key="4">
    <citation type="journal article" date="2017" name="Nat. Commun.">
        <title>Characterization of a dual function macrocyclase enables design and use of efficient macrocyclization substrates.</title>
        <authorList>
            <person name="Czekster C.M."/>
            <person name="Ludewig H."/>
            <person name="McMahon S.A."/>
            <person name="Naismith J.H."/>
        </authorList>
    </citation>
    <scope>X-RAY CRYSTALLOGRAPHY (1.44 ANGSTROMS) IN COMPLEX WITH SUBSTRATE</scope>
    <scope>FUNCTION</scope>
    <scope>MUTAGENESIS OF SER-577; ASP-661; ARG-663; TRP-695 AND HIS-698</scope>
    <scope>ACTIVE SITE</scope>
    <scope>CATALYTIC ACTIVITY</scope>
    <scope>BIOPHYSICOCHEMICAL PROPERTIES</scope>
</reference>
<evidence type="ECO:0000250" key="1">
    <source>
        <dbReference type="UniProtKB" id="P48147"/>
    </source>
</evidence>
<evidence type="ECO:0000255" key="2">
    <source>
        <dbReference type="PROSITE-ProRule" id="PRU10084"/>
    </source>
</evidence>
<evidence type="ECO:0000256" key="3">
    <source>
        <dbReference type="SAM" id="MobiDB-lite"/>
    </source>
</evidence>
<evidence type="ECO:0000269" key="4">
    <source>
    </source>
</evidence>
<evidence type="ECO:0000269" key="5">
    <source>
    </source>
</evidence>
<evidence type="ECO:0000269" key="6">
    <source>
    </source>
</evidence>
<evidence type="ECO:0000303" key="7">
    <source>
    </source>
</evidence>
<evidence type="ECO:0000303" key="8">
    <source>
    </source>
</evidence>
<evidence type="ECO:0000305" key="9"/>
<evidence type="ECO:0007829" key="10">
    <source>
        <dbReference type="PDB" id="5N4B"/>
    </source>
</evidence>
<evidence type="ECO:0007829" key="11">
    <source>
        <dbReference type="PDB" id="5N4F"/>
    </source>
</evidence>
<protein>
    <recommendedName>
        <fullName evidence="8">Dual function macrocyclase-peptidase POPB</fullName>
        <ecNumber evidence="5 6">3.4.21.26</ecNumber>
    </recommendedName>
    <alternativeName>
        <fullName evidence="7">Prolyl oligopeptidase B</fullName>
        <shortName evidence="7">POP B</shortName>
    </alternativeName>
    <alternativeName>
        <fullName evidence="7">Toxin-processing prolyl oligopeptidase</fullName>
    </alternativeName>
</protein>
<feature type="chain" id="PRO_0000443717" description="Dual function macrocyclase-peptidase POPB">
    <location>
        <begin position="1"/>
        <end position="730"/>
    </location>
</feature>
<feature type="region of interest" description="Disordered" evidence="3">
    <location>
        <begin position="1"/>
        <end position="34"/>
    </location>
</feature>
<feature type="active site" description="Charge relay system" evidence="2 6">
    <location>
        <position position="577"/>
    </location>
</feature>
<feature type="active site" description="Charge relay system" evidence="2 6">
    <location>
        <position position="661"/>
    </location>
</feature>
<feature type="active site" description="Charge relay system" evidence="2 6">
    <location>
        <position position="698"/>
    </location>
</feature>
<feature type="mutagenesis site" description="Impairs catalytic activity but still binds both 35mer and 25mer substrates." evidence="6">
    <original>S</original>
    <variation>A</variation>
    <location>
        <position position="577"/>
    </location>
</feature>
<feature type="mutagenesis site" description="Impairs catalytic activity but still binds both 35mer and 25mer substrates." evidence="6">
    <original>D</original>
    <variation>A</variation>
    <location>
        <position position="661"/>
    </location>
</feature>
<feature type="mutagenesis site" description="Leads to diminished activities for both peptide bond hydrolysis and macrocyclization." evidence="6">
    <original>R</original>
    <variation>A</variation>
    <variation>K</variation>
    <variation>Q</variation>
    <location>
        <position position="663"/>
    </location>
</feature>
<feature type="mutagenesis site" description="Leads to diminished activities for both peptide bond hydrolysis and macrocyclization." evidence="6">
    <location>
        <position position="695"/>
    </location>
</feature>
<feature type="mutagenesis site" description="Impairs catalytic activity but still binds both 35mer and 25mer substrates." evidence="6">
    <original>H</original>
    <variation>A</variation>
    <location>
        <position position="698"/>
    </location>
</feature>
<feature type="strand" evidence="10">
    <location>
        <begin position="20"/>
        <end position="25"/>
    </location>
</feature>
<feature type="turn" evidence="10">
    <location>
        <begin position="26"/>
        <end position="28"/>
    </location>
</feature>
<feature type="strand" evidence="10">
    <location>
        <begin position="29"/>
        <end position="34"/>
    </location>
</feature>
<feature type="helix" evidence="10">
    <location>
        <begin position="38"/>
        <end position="41"/>
    </location>
</feature>
<feature type="helix" evidence="10">
    <location>
        <begin position="45"/>
        <end position="63"/>
    </location>
</feature>
<feature type="helix" evidence="10">
    <location>
        <begin position="67"/>
        <end position="79"/>
    </location>
</feature>
<feature type="strand" evidence="10">
    <location>
        <begin position="95"/>
        <end position="100"/>
    </location>
</feature>
<feature type="strand" evidence="11">
    <location>
        <begin position="102"/>
        <end position="106"/>
    </location>
</feature>
<feature type="strand" evidence="10">
    <location>
        <begin position="108"/>
        <end position="116"/>
    </location>
</feature>
<feature type="helix" evidence="10">
    <location>
        <begin position="120"/>
        <end position="122"/>
    </location>
</feature>
<feature type="helix" evidence="10">
    <location>
        <begin position="124"/>
        <end position="127"/>
    </location>
</feature>
<feature type="strand" evidence="10">
    <location>
        <begin position="128"/>
        <end position="132"/>
    </location>
</feature>
<feature type="helix" evidence="10">
    <location>
        <begin position="134"/>
        <end position="136"/>
    </location>
</feature>
<feature type="strand" evidence="10">
    <location>
        <begin position="143"/>
        <end position="150"/>
    </location>
</feature>
<feature type="strand" evidence="10">
    <location>
        <begin position="154"/>
        <end position="163"/>
    </location>
</feature>
<feature type="strand" evidence="10">
    <location>
        <begin position="167"/>
        <end position="175"/>
    </location>
</feature>
<feature type="helix" evidence="10">
    <location>
        <begin position="182"/>
        <end position="187"/>
    </location>
</feature>
<feature type="strand" evidence="10">
    <location>
        <begin position="197"/>
        <end position="200"/>
    </location>
</feature>
<feature type="strand" evidence="10">
    <location>
        <begin position="211"/>
        <end position="218"/>
    </location>
</feature>
<feature type="strand" evidence="10">
    <location>
        <begin position="235"/>
        <end position="240"/>
    </location>
</feature>
<feature type="helix" evidence="10">
    <location>
        <begin position="245"/>
        <end position="247"/>
    </location>
</feature>
<feature type="strand" evidence="10">
    <location>
        <begin position="249"/>
        <end position="253"/>
    </location>
</feature>
<feature type="strand" evidence="10">
    <location>
        <begin position="261"/>
        <end position="266"/>
    </location>
</feature>
<feature type="strand" evidence="10">
    <location>
        <begin position="272"/>
        <end position="283"/>
    </location>
</feature>
<feature type="strand" evidence="10">
    <location>
        <begin position="286"/>
        <end position="291"/>
    </location>
</feature>
<feature type="strand" evidence="10">
    <location>
        <begin position="304"/>
        <end position="307"/>
    </location>
</feature>
<feature type="strand" evidence="10">
    <location>
        <begin position="309"/>
        <end position="312"/>
    </location>
</feature>
<feature type="strand" evidence="10">
    <location>
        <begin position="314"/>
        <end position="320"/>
    </location>
</feature>
<feature type="strand" evidence="10">
    <location>
        <begin position="323"/>
        <end position="328"/>
    </location>
</feature>
<feature type="strand" evidence="10">
    <location>
        <begin position="336"/>
        <end position="341"/>
    </location>
</feature>
<feature type="strand" evidence="10">
    <location>
        <begin position="344"/>
        <end position="346"/>
    </location>
</feature>
<feature type="strand" evidence="10">
    <location>
        <begin position="348"/>
        <end position="353"/>
    </location>
</feature>
<feature type="strand" evidence="10">
    <location>
        <begin position="359"/>
        <end position="367"/>
    </location>
</feature>
<feature type="turn" evidence="10">
    <location>
        <begin position="368"/>
        <end position="370"/>
    </location>
</feature>
<feature type="strand" evidence="10">
    <location>
        <begin position="371"/>
        <end position="378"/>
    </location>
</feature>
<feature type="strand" evidence="10">
    <location>
        <begin position="381"/>
        <end position="387"/>
    </location>
</feature>
<feature type="strand" evidence="10">
    <location>
        <begin position="393"/>
        <end position="398"/>
    </location>
</feature>
<feature type="strand" evidence="10">
    <location>
        <begin position="403"/>
        <end position="408"/>
    </location>
</feature>
<feature type="strand" evidence="10">
    <location>
        <begin position="413"/>
        <end position="422"/>
    </location>
</feature>
<feature type="strand" evidence="10">
    <location>
        <begin position="425"/>
        <end position="433"/>
    </location>
</feature>
<feature type="helix" evidence="11">
    <location>
        <begin position="438"/>
        <end position="440"/>
    </location>
</feature>
<feature type="strand" evidence="10">
    <location>
        <begin position="442"/>
        <end position="447"/>
    </location>
</feature>
<feature type="helix" evidence="10">
    <location>
        <begin position="455"/>
        <end position="457"/>
    </location>
</feature>
<feature type="strand" evidence="10">
    <location>
        <begin position="458"/>
        <end position="466"/>
    </location>
</feature>
<feature type="strand" evidence="10">
    <location>
        <begin position="472"/>
        <end position="480"/>
    </location>
</feature>
<feature type="turn" evidence="11">
    <location>
        <begin position="485"/>
        <end position="488"/>
    </location>
</feature>
<feature type="strand" evidence="10">
    <location>
        <begin position="491"/>
        <end position="494"/>
    </location>
</feature>
<feature type="helix" evidence="10">
    <location>
        <begin position="509"/>
        <end position="518"/>
    </location>
</feature>
<feature type="strand" evidence="10">
    <location>
        <begin position="521"/>
        <end position="525"/>
    </location>
</feature>
<feature type="helix" evidence="10">
    <location>
        <begin position="535"/>
        <end position="539"/>
    </location>
</feature>
<feature type="helix" evidence="10">
    <location>
        <begin position="543"/>
        <end position="546"/>
    </location>
</feature>
<feature type="helix" evidence="10">
    <location>
        <begin position="547"/>
        <end position="562"/>
    </location>
</feature>
<feature type="strand" evidence="10">
    <location>
        <begin position="571"/>
        <end position="576"/>
    </location>
</feature>
<feature type="helix" evidence="10">
    <location>
        <begin position="578"/>
        <end position="589"/>
    </location>
</feature>
<feature type="strand" evidence="10">
    <location>
        <begin position="596"/>
        <end position="602"/>
    </location>
</feature>
<feature type="turn" evidence="10">
    <location>
        <begin position="607"/>
        <end position="609"/>
    </location>
</feature>
<feature type="helix" evidence="10">
    <location>
        <begin position="610"/>
        <end position="612"/>
    </location>
</feature>
<feature type="helix" evidence="10">
    <location>
        <begin position="616"/>
        <end position="619"/>
    </location>
</feature>
<feature type="helix" evidence="10">
    <location>
        <begin position="620"/>
        <end position="623"/>
    </location>
</feature>
<feature type="helix" evidence="10">
    <location>
        <begin position="629"/>
        <end position="635"/>
    </location>
</feature>
<feature type="turn" evidence="10">
    <location>
        <begin position="636"/>
        <end position="638"/>
    </location>
</feature>
<feature type="helix" evidence="10">
    <location>
        <begin position="640"/>
        <end position="642"/>
    </location>
</feature>
<feature type="strand" evidence="10">
    <location>
        <begin position="646"/>
        <end position="648"/>
    </location>
</feature>
<feature type="strand" evidence="10">
    <location>
        <begin position="652"/>
        <end position="658"/>
    </location>
</feature>
<feature type="strand" evidence="10">
    <location>
        <begin position="662"/>
        <end position="664"/>
    </location>
</feature>
<feature type="helix" evidence="10">
    <location>
        <begin position="667"/>
        <end position="679"/>
    </location>
</feature>
<feature type="strand" evidence="10">
    <location>
        <begin position="687"/>
        <end position="692"/>
    </location>
</feature>
<feature type="helix" evidence="10">
    <location>
        <begin position="704"/>
        <end position="721"/>
    </location>
</feature>
<name>POPB_GALM3</name>
<proteinExistence type="evidence at protein level"/>
<organism>
    <name type="scientific">Galerina marginata (strain CBS 339.88)</name>
    <dbReference type="NCBI Taxonomy" id="685588"/>
    <lineage>
        <taxon>Eukaryota</taxon>
        <taxon>Fungi</taxon>
        <taxon>Dikarya</taxon>
        <taxon>Basidiomycota</taxon>
        <taxon>Agaricomycotina</taxon>
        <taxon>Agaricomycetes</taxon>
        <taxon>Agaricomycetidae</taxon>
        <taxon>Agaricales</taxon>
        <taxon>Agaricineae</taxon>
        <taxon>Strophariaceae</taxon>
        <taxon>Galerina</taxon>
    </lineage>
</organism>
<accession>H2E7Q8</accession>
<accession>A0A067SC43</accession>